<protein>
    <recommendedName>
        <fullName evidence="6">Very long-chain specific acyl-CoA dehydrogenase, mitochondrial</fullName>
        <ecNumber evidence="2">1.3.8.9</ecNumber>
    </recommendedName>
    <alternativeName>
        <fullName evidence="8">MVLCAD</fullName>
        <shortName evidence="8">VLCAD</shortName>
    </alternativeName>
</protein>
<comment type="function">
    <text evidence="2">Very long-chain specific acyl-CoA dehydrogenase is one of the acyl-CoA dehydrogenases that catalyze the first step of mitochondrial fatty acid beta-oxidation, an aerobic process breaking down fatty acids into acetyl-CoA and allowing the production of energy from fats. The first step of fatty acid beta-oxidation consists in the removal of one hydrogen from C-2 and C-3 of the straight-chain fatty acyl-CoA thioester, resulting in the formation of trans-2-enoyl-CoA. Among the different mitochondrial acyl-CoA dehydrogenases, very long-chain specific acyl-CoA dehydrogenase acts specifically on acyl-CoAs with saturated 12 to 24 carbons long primary chains.</text>
</comment>
<comment type="catalytic activity">
    <reaction evidence="2">
        <text>a very-long-chain 2,3-saturated fatty acyl-CoA + oxidized [electron-transfer flavoprotein] + H(+) = a very-long-chain (2E)-enoyl-CoA + reduced [electron-transfer flavoprotein]</text>
        <dbReference type="Rhea" id="RHEA:19181"/>
        <dbReference type="Rhea" id="RHEA-COMP:10685"/>
        <dbReference type="Rhea" id="RHEA-COMP:10686"/>
        <dbReference type="ChEBI" id="CHEBI:15378"/>
        <dbReference type="ChEBI" id="CHEBI:57692"/>
        <dbReference type="ChEBI" id="CHEBI:58307"/>
        <dbReference type="ChEBI" id="CHEBI:83724"/>
        <dbReference type="ChEBI" id="CHEBI:83728"/>
        <dbReference type="EC" id="1.3.8.9"/>
    </reaction>
    <physiologicalReaction direction="left-to-right" evidence="2">
        <dbReference type="Rhea" id="RHEA:19182"/>
    </physiologicalReaction>
</comment>
<comment type="catalytic activity">
    <reaction evidence="2">
        <text>dodecanoyl-CoA + oxidized [electron-transfer flavoprotein] + H(+) = (2E)-dodecenoyl-CoA + reduced [electron-transfer flavoprotein]</text>
        <dbReference type="Rhea" id="RHEA:47296"/>
        <dbReference type="Rhea" id="RHEA-COMP:10685"/>
        <dbReference type="Rhea" id="RHEA-COMP:10686"/>
        <dbReference type="ChEBI" id="CHEBI:15378"/>
        <dbReference type="ChEBI" id="CHEBI:57330"/>
        <dbReference type="ChEBI" id="CHEBI:57375"/>
        <dbReference type="ChEBI" id="CHEBI:57692"/>
        <dbReference type="ChEBI" id="CHEBI:58307"/>
    </reaction>
    <physiologicalReaction direction="left-to-right" evidence="2">
        <dbReference type="Rhea" id="RHEA:47297"/>
    </physiologicalReaction>
</comment>
<comment type="catalytic activity">
    <reaction evidence="2">
        <text>tetradecanoyl-CoA + oxidized [electron-transfer flavoprotein] + H(+) = (2E)-tetradecenoyl-CoA + reduced [electron-transfer flavoprotein]</text>
        <dbReference type="Rhea" id="RHEA:47316"/>
        <dbReference type="Rhea" id="RHEA-COMP:10685"/>
        <dbReference type="Rhea" id="RHEA-COMP:10686"/>
        <dbReference type="ChEBI" id="CHEBI:15378"/>
        <dbReference type="ChEBI" id="CHEBI:57385"/>
        <dbReference type="ChEBI" id="CHEBI:57692"/>
        <dbReference type="ChEBI" id="CHEBI:58307"/>
        <dbReference type="ChEBI" id="CHEBI:61405"/>
    </reaction>
    <physiologicalReaction direction="left-to-right" evidence="2">
        <dbReference type="Rhea" id="RHEA:47317"/>
    </physiologicalReaction>
</comment>
<comment type="catalytic activity">
    <reaction evidence="2">
        <text>oxidized [electron-transfer flavoprotein] + hexadecanoyl-CoA + H(+) = (2E)-hexadecenoyl-CoA + reduced [electron-transfer flavoprotein]</text>
        <dbReference type="Rhea" id="RHEA:43448"/>
        <dbReference type="Rhea" id="RHEA-COMP:10685"/>
        <dbReference type="Rhea" id="RHEA-COMP:10686"/>
        <dbReference type="ChEBI" id="CHEBI:15378"/>
        <dbReference type="ChEBI" id="CHEBI:57379"/>
        <dbReference type="ChEBI" id="CHEBI:57692"/>
        <dbReference type="ChEBI" id="CHEBI:58307"/>
        <dbReference type="ChEBI" id="CHEBI:61526"/>
    </reaction>
    <physiologicalReaction direction="left-to-right" evidence="2">
        <dbReference type="Rhea" id="RHEA:43449"/>
    </physiologicalReaction>
</comment>
<comment type="catalytic activity">
    <reaction evidence="2">
        <text>octadecanoyl-CoA + oxidized [electron-transfer flavoprotein] + H(+) = (2E)-octadecenoyl-CoA + reduced [electron-transfer flavoprotein]</text>
        <dbReference type="Rhea" id="RHEA:47240"/>
        <dbReference type="Rhea" id="RHEA-COMP:10685"/>
        <dbReference type="Rhea" id="RHEA-COMP:10686"/>
        <dbReference type="ChEBI" id="CHEBI:15378"/>
        <dbReference type="ChEBI" id="CHEBI:57394"/>
        <dbReference type="ChEBI" id="CHEBI:57692"/>
        <dbReference type="ChEBI" id="CHEBI:58307"/>
        <dbReference type="ChEBI" id="CHEBI:71412"/>
    </reaction>
    <physiologicalReaction direction="left-to-right" evidence="2">
        <dbReference type="Rhea" id="RHEA:47241"/>
    </physiologicalReaction>
</comment>
<comment type="catalytic activity">
    <reaction evidence="2">
        <text>eicosanoyl-CoA + oxidized [electron-transfer flavoprotein] + H(+) = (2E)-eicosenoyl-CoA + reduced [electron-transfer flavoprotein]</text>
        <dbReference type="Rhea" id="RHEA:47236"/>
        <dbReference type="Rhea" id="RHEA-COMP:10685"/>
        <dbReference type="Rhea" id="RHEA-COMP:10686"/>
        <dbReference type="ChEBI" id="CHEBI:15378"/>
        <dbReference type="ChEBI" id="CHEBI:57380"/>
        <dbReference type="ChEBI" id="CHEBI:57692"/>
        <dbReference type="ChEBI" id="CHEBI:58307"/>
        <dbReference type="ChEBI" id="CHEBI:74691"/>
    </reaction>
    <physiologicalReaction direction="left-to-right" evidence="2">
        <dbReference type="Rhea" id="RHEA:47237"/>
    </physiologicalReaction>
</comment>
<comment type="catalytic activity">
    <reaction evidence="2">
        <text>docosanoyl-CoA + oxidized [electron-transfer flavoprotein] + H(+) = (2E)-docosenoyl-CoA + reduced [electron-transfer flavoprotein]</text>
        <dbReference type="Rhea" id="RHEA:47228"/>
        <dbReference type="Rhea" id="RHEA-COMP:10685"/>
        <dbReference type="Rhea" id="RHEA-COMP:10686"/>
        <dbReference type="ChEBI" id="CHEBI:15378"/>
        <dbReference type="ChEBI" id="CHEBI:57692"/>
        <dbReference type="ChEBI" id="CHEBI:58307"/>
        <dbReference type="ChEBI" id="CHEBI:65059"/>
        <dbReference type="ChEBI" id="CHEBI:74692"/>
    </reaction>
    <physiologicalReaction direction="left-to-right" evidence="2">
        <dbReference type="Rhea" id="RHEA:47229"/>
    </physiologicalReaction>
</comment>
<comment type="catalytic activity">
    <reaction evidence="2">
        <text>tetracosanoyl-CoA + oxidized [electron-transfer flavoprotein] + H(+) = (2E)-tetracosenoyl-CoA + reduced [electron-transfer flavoprotein]</text>
        <dbReference type="Rhea" id="RHEA:47232"/>
        <dbReference type="Rhea" id="RHEA-COMP:10685"/>
        <dbReference type="Rhea" id="RHEA-COMP:10686"/>
        <dbReference type="ChEBI" id="CHEBI:15378"/>
        <dbReference type="ChEBI" id="CHEBI:57692"/>
        <dbReference type="ChEBI" id="CHEBI:58307"/>
        <dbReference type="ChEBI" id="CHEBI:65052"/>
        <dbReference type="ChEBI" id="CHEBI:74693"/>
    </reaction>
    <physiologicalReaction direction="left-to-right" evidence="2">
        <dbReference type="Rhea" id="RHEA:47233"/>
    </physiologicalReaction>
</comment>
<comment type="cofactor">
    <cofactor evidence="2">
        <name>FAD</name>
        <dbReference type="ChEBI" id="CHEBI:57692"/>
    </cofactor>
</comment>
<comment type="pathway">
    <text evidence="2">Lipid metabolism; mitochondrial fatty acid beta-oxidation.</text>
</comment>
<comment type="subunit">
    <text evidence="2">Homodimer. Homodimerizes after import into the mitochondrion.</text>
</comment>
<comment type="subcellular location">
    <subcellularLocation>
        <location evidence="2">Mitochondrion inner membrane</location>
        <topology evidence="2">Peripheral membrane protein</topology>
    </subcellularLocation>
</comment>
<comment type="PTM">
    <text evidence="4">S-nitrosylation at Cys-238 in liver improves catalytic efficiency.</text>
</comment>
<comment type="similarity">
    <text evidence="5">Belongs to the acyl-CoA dehydrogenase family.</text>
</comment>
<name>ACADV_MOUSE</name>
<sequence length="656" mass="70875">MQSARMTPSVGRQLLRLGARSSRSTTVLQGQPRPISAQRLYAREATQAVLDKPETLSSDASTREKPARAESKSFAVGMFKGQLTIDQVFPYPSVLSEEQAQFLKELVGPVARFFEEVNDPAKNDALEKVEDDTLQGLKELGAFGLQVPSELGGLGLSNTQYARLAEIVGMHDLGVSVTLGAHQSIGFKGILLYGTKAQREKYLPRVASGQALAAFCLTEPSSGSDVASIRSSAIPSPCGKYYTLNGSKIWISNGGLADIFTVFAKTPIKDAATGAVKEKITAFVVERSFGGVTHGLPEKKMGIKASNTSEVYFDGVKVPSENVLGEVGDGFKVAVNILNNGRFGMAATLAGTMKSLIAKAVDHATNRTQFGDKIHNFGVIQEKLARMAILQYVTESMAYMLSANMDQGFKDFQIEAAISKIFCSEAAWKVADECIQIMGGMGFMKEPGVERVLRDIRIFRIFEGANDILRLFVALQGCMDKGKELTGLGNALKNPFGNVGLLMGEAGKQLRRRTGIGSGLSLSGIVHPELSRSGELAVQALDQFATVVEAKLVKHKKGIVNEQFLLQRLADGAIDLYAMVVVLSRASRSLSEGYPTAQHEKMLCDSWCIEAATRIRENMASLQSSPQHQELFRNFRSISKAMVENGGLVTGNPLGI</sequence>
<organism>
    <name type="scientific">Mus musculus</name>
    <name type="common">Mouse</name>
    <dbReference type="NCBI Taxonomy" id="10090"/>
    <lineage>
        <taxon>Eukaryota</taxon>
        <taxon>Metazoa</taxon>
        <taxon>Chordata</taxon>
        <taxon>Craniata</taxon>
        <taxon>Vertebrata</taxon>
        <taxon>Euteleostomi</taxon>
        <taxon>Mammalia</taxon>
        <taxon>Eutheria</taxon>
        <taxon>Euarchontoglires</taxon>
        <taxon>Glires</taxon>
        <taxon>Rodentia</taxon>
        <taxon>Myomorpha</taxon>
        <taxon>Muroidea</taxon>
        <taxon>Muridae</taxon>
        <taxon>Murinae</taxon>
        <taxon>Mus</taxon>
        <taxon>Mus</taxon>
    </lineage>
</organism>
<proteinExistence type="evidence at protein level"/>
<accession>P50544</accession>
<accession>O35289</accession>
<accession>O55133</accession>
<keyword id="KW-0002">3D-structure</keyword>
<keyword id="KW-0007">Acetylation</keyword>
<keyword id="KW-0274">FAD</keyword>
<keyword id="KW-0276">Fatty acid metabolism</keyword>
<keyword id="KW-0285">Flavoprotein</keyword>
<keyword id="KW-0443">Lipid metabolism</keyword>
<keyword id="KW-0472">Membrane</keyword>
<keyword id="KW-0496">Mitochondrion</keyword>
<keyword id="KW-0999">Mitochondrion inner membrane</keyword>
<keyword id="KW-0560">Oxidoreductase</keyword>
<keyword id="KW-0597">Phosphoprotein</keyword>
<keyword id="KW-1185">Reference proteome</keyword>
<keyword id="KW-0702">S-nitrosylation</keyword>
<keyword id="KW-0809">Transit peptide</keyword>
<dbReference type="EC" id="1.3.8.9" evidence="2"/>
<dbReference type="EMBL" id="Y11770">
    <property type="protein sequence ID" value="CAA72435.1"/>
    <property type="molecule type" value="Genomic_DNA"/>
</dbReference>
<dbReference type="EMBL" id="Z71189">
    <property type="protein sequence ID" value="CAA94919.2"/>
    <property type="molecule type" value="mRNA"/>
</dbReference>
<dbReference type="EMBL" id="BC026559">
    <property type="protein sequence ID" value="AAH26559.1"/>
    <property type="molecule type" value="mRNA"/>
</dbReference>
<dbReference type="EMBL" id="AF017176">
    <property type="protein sequence ID" value="AAC31642.1"/>
    <property type="molecule type" value="mRNA"/>
</dbReference>
<dbReference type="EMBL" id="U41497">
    <property type="protein sequence ID" value="AAA85185.1"/>
    <property type="molecule type" value="mRNA"/>
</dbReference>
<dbReference type="CCDS" id="CCDS24931.1"/>
<dbReference type="RefSeq" id="NP_059062.1">
    <property type="nucleotide sequence ID" value="NM_017366.3"/>
</dbReference>
<dbReference type="PDB" id="8CA1">
    <property type="method" value="EM"/>
    <property type="resolution" value="4.30 A"/>
    <property type="chains" value="A/B=1-656"/>
</dbReference>
<dbReference type="PDBsum" id="8CA1"/>
<dbReference type="EMDB" id="EMD-16515"/>
<dbReference type="SMR" id="P50544"/>
<dbReference type="BioGRID" id="197914">
    <property type="interactions" value="42"/>
</dbReference>
<dbReference type="FunCoup" id="P50544">
    <property type="interactions" value="1729"/>
</dbReference>
<dbReference type="IntAct" id="P50544">
    <property type="interactions" value="2"/>
</dbReference>
<dbReference type="STRING" id="10090.ENSMUSP00000099634"/>
<dbReference type="GlyGen" id="P50544">
    <property type="glycosylation" value="2 sites, 1 N-linked glycan (1 site), 1 O-linked glycan (1 site)"/>
</dbReference>
<dbReference type="iPTMnet" id="P50544"/>
<dbReference type="PhosphoSitePlus" id="P50544"/>
<dbReference type="SwissPalm" id="P50544"/>
<dbReference type="jPOST" id="P50544"/>
<dbReference type="PaxDb" id="10090-ENSMUSP00000099634"/>
<dbReference type="PeptideAtlas" id="P50544"/>
<dbReference type="ProteomicsDB" id="285633"/>
<dbReference type="Pumba" id="P50544"/>
<dbReference type="Antibodypedia" id="11798">
    <property type="antibodies" value="294 antibodies from 33 providers"/>
</dbReference>
<dbReference type="DNASU" id="11370"/>
<dbReference type="Ensembl" id="ENSMUST00000102574.10">
    <property type="protein sequence ID" value="ENSMUSP00000099634.4"/>
    <property type="gene ID" value="ENSMUSG00000018574.15"/>
</dbReference>
<dbReference type="GeneID" id="11370"/>
<dbReference type="KEGG" id="mmu:11370"/>
<dbReference type="UCSC" id="uc007jto.2">
    <property type="organism name" value="mouse"/>
</dbReference>
<dbReference type="AGR" id="MGI:895149"/>
<dbReference type="CTD" id="37"/>
<dbReference type="MGI" id="MGI:895149">
    <property type="gene designation" value="Acadvl"/>
</dbReference>
<dbReference type="VEuPathDB" id="HostDB:ENSMUSG00000018574"/>
<dbReference type="eggNOG" id="KOG0137">
    <property type="taxonomic scope" value="Eukaryota"/>
</dbReference>
<dbReference type="GeneTree" id="ENSGT00940000158535"/>
<dbReference type="InParanoid" id="P50544"/>
<dbReference type="OMA" id="NAFMGLR"/>
<dbReference type="OrthoDB" id="2588832at2759"/>
<dbReference type="PhylomeDB" id="P50544"/>
<dbReference type="TreeFam" id="TF105053"/>
<dbReference type="BRENDA" id="1.3.8.9">
    <property type="organism ID" value="3474"/>
</dbReference>
<dbReference type="Reactome" id="R-MMU-77305">
    <property type="pathway name" value="Beta oxidation of palmitoyl-CoA to myristoyl-CoA"/>
</dbReference>
<dbReference type="UniPathway" id="UPA00660"/>
<dbReference type="BioGRID-ORCS" id="11370">
    <property type="hits" value="3 hits in 79 CRISPR screens"/>
</dbReference>
<dbReference type="CD-CODE" id="CE726F99">
    <property type="entry name" value="Postsynaptic density"/>
</dbReference>
<dbReference type="ChiTaRS" id="Acadvl">
    <property type="organism name" value="mouse"/>
</dbReference>
<dbReference type="PRO" id="PR:P50544"/>
<dbReference type="Proteomes" id="UP000000589">
    <property type="component" value="Chromosome 11"/>
</dbReference>
<dbReference type="RNAct" id="P50544">
    <property type="molecule type" value="protein"/>
</dbReference>
<dbReference type="Bgee" id="ENSMUSG00000018574">
    <property type="expression patterns" value="Expressed in myocardium of ventricle and 250 other cell types or tissues"/>
</dbReference>
<dbReference type="ExpressionAtlas" id="P50544">
    <property type="expression patterns" value="baseline and differential"/>
</dbReference>
<dbReference type="GO" id="GO:0005743">
    <property type="term" value="C:mitochondrial inner membrane"/>
    <property type="evidence" value="ECO:0007669"/>
    <property type="project" value="UniProtKB-SubCell"/>
</dbReference>
<dbReference type="GO" id="GO:0042645">
    <property type="term" value="C:mitochondrial nucleoid"/>
    <property type="evidence" value="ECO:0007669"/>
    <property type="project" value="Ensembl"/>
</dbReference>
<dbReference type="GO" id="GO:0005739">
    <property type="term" value="C:mitochondrion"/>
    <property type="evidence" value="ECO:0007005"/>
    <property type="project" value="MGI"/>
</dbReference>
<dbReference type="GO" id="GO:0005730">
    <property type="term" value="C:nucleolus"/>
    <property type="evidence" value="ECO:0007669"/>
    <property type="project" value="Ensembl"/>
</dbReference>
<dbReference type="GO" id="GO:0005654">
    <property type="term" value="C:nucleoplasm"/>
    <property type="evidence" value="ECO:0007669"/>
    <property type="project" value="Ensembl"/>
</dbReference>
<dbReference type="GO" id="GO:0003995">
    <property type="term" value="F:acyl-CoA dehydrogenase activity"/>
    <property type="evidence" value="ECO:0000250"/>
    <property type="project" value="UniProtKB"/>
</dbReference>
<dbReference type="GO" id="GO:0050660">
    <property type="term" value="F:flavin adenine dinucleotide binding"/>
    <property type="evidence" value="ECO:0000250"/>
    <property type="project" value="UniProtKB"/>
</dbReference>
<dbReference type="GO" id="GO:0042802">
    <property type="term" value="F:identical protein binding"/>
    <property type="evidence" value="ECO:0000250"/>
    <property type="project" value="UniProtKB"/>
</dbReference>
<dbReference type="GO" id="GO:0004466">
    <property type="term" value="F:long-chain fatty acyl-CoA dehydrogenase activity"/>
    <property type="evidence" value="ECO:0007669"/>
    <property type="project" value="Ensembl"/>
</dbReference>
<dbReference type="GO" id="GO:0017099">
    <property type="term" value="F:very-long-chain fatty acyl-CoA dehydrogenase activity"/>
    <property type="evidence" value="ECO:0000250"/>
    <property type="project" value="UniProtKB"/>
</dbReference>
<dbReference type="GO" id="GO:0030855">
    <property type="term" value="P:epithelial cell differentiation"/>
    <property type="evidence" value="ECO:0007669"/>
    <property type="project" value="Ensembl"/>
</dbReference>
<dbReference type="GO" id="GO:0033539">
    <property type="term" value="P:fatty acid beta-oxidation using acyl-CoA dehydrogenase"/>
    <property type="evidence" value="ECO:0000315"/>
    <property type="project" value="BHF-UCL"/>
</dbReference>
<dbReference type="GO" id="GO:0009062">
    <property type="term" value="P:fatty acid catabolic process"/>
    <property type="evidence" value="ECO:0000315"/>
    <property type="project" value="MGI"/>
</dbReference>
<dbReference type="GO" id="GO:0045717">
    <property type="term" value="P:negative regulation of fatty acid biosynthetic process"/>
    <property type="evidence" value="ECO:0000315"/>
    <property type="project" value="BHF-UCL"/>
</dbReference>
<dbReference type="GO" id="GO:0046322">
    <property type="term" value="P:negative regulation of fatty acid oxidation"/>
    <property type="evidence" value="ECO:0000315"/>
    <property type="project" value="BHF-UCL"/>
</dbReference>
<dbReference type="GO" id="GO:0090181">
    <property type="term" value="P:regulation of cholesterol metabolic process"/>
    <property type="evidence" value="ECO:0000315"/>
    <property type="project" value="BHF-UCL"/>
</dbReference>
<dbReference type="GO" id="GO:0009409">
    <property type="term" value="P:response to cold"/>
    <property type="evidence" value="ECO:0000315"/>
    <property type="project" value="MGI"/>
</dbReference>
<dbReference type="GO" id="GO:0001659">
    <property type="term" value="P:temperature homeostasis"/>
    <property type="evidence" value="ECO:0000315"/>
    <property type="project" value="BHF-UCL"/>
</dbReference>
<dbReference type="CDD" id="cd01161">
    <property type="entry name" value="VLCAD"/>
    <property type="match status" value="1"/>
</dbReference>
<dbReference type="FunFam" id="1.20.140.10:FF:000008">
    <property type="entry name" value="acyl-CoA dehydrogenase family member 9, mitochondrial"/>
    <property type="match status" value="1"/>
</dbReference>
<dbReference type="FunFam" id="1.20.140.10:FF:000017">
    <property type="entry name" value="very long-chain specific acyl-CoA dehydrogenase, mitochondrial"/>
    <property type="match status" value="1"/>
</dbReference>
<dbReference type="FunFam" id="2.40.110.10:FF:000006">
    <property type="entry name" value="very long-chain specific acyl-CoA dehydrogenase, mitochondrial"/>
    <property type="match status" value="1"/>
</dbReference>
<dbReference type="FunFam" id="1.10.540.10:FF:000001">
    <property type="entry name" value="Very long-chain-specific acyl-CoA dehydrogenase, mitochondrial"/>
    <property type="match status" value="1"/>
</dbReference>
<dbReference type="Gene3D" id="1.10.540.10">
    <property type="entry name" value="Acyl-CoA dehydrogenase/oxidase, N-terminal domain"/>
    <property type="match status" value="1"/>
</dbReference>
<dbReference type="Gene3D" id="2.40.110.10">
    <property type="entry name" value="Butyryl-CoA Dehydrogenase, subunit A, domain 2"/>
    <property type="match status" value="1"/>
</dbReference>
<dbReference type="Gene3D" id="1.20.140.10">
    <property type="entry name" value="Butyryl-CoA Dehydrogenase, subunit A, domain 3"/>
    <property type="match status" value="2"/>
</dbReference>
<dbReference type="InterPro" id="IPR049448">
    <property type="entry name" value="ACAD9/ACADV-like_C"/>
</dbReference>
<dbReference type="InterPro" id="IPR006089">
    <property type="entry name" value="Acyl-CoA_DH_CS"/>
</dbReference>
<dbReference type="InterPro" id="IPR006091">
    <property type="entry name" value="Acyl-CoA_Oxase/DH_mid-dom"/>
</dbReference>
<dbReference type="InterPro" id="IPR046373">
    <property type="entry name" value="Acyl-CoA_Oxase/DH_mid-dom_sf"/>
</dbReference>
<dbReference type="InterPro" id="IPR036250">
    <property type="entry name" value="AcylCo_DH-like_C"/>
</dbReference>
<dbReference type="InterPro" id="IPR009075">
    <property type="entry name" value="AcylCo_DH/oxidase_C"/>
</dbReference>
<dbReference type="InterPro" id="IPR013786">
    <property type="entry name" value="AcylCoA_DH/ox_N"/>
</dbReference>
<dbReference type="InterPro" id="IPR037069">
    <property type="entry name" value="AcylCoA_DH/ox_N_sf"/>
</dbReference>
<dbReference type="InterPro" id="IPR009100">
    <property type="entry name" value="AcylCoA_DH/oxidase_NM_dom_sf"/>
</dbReference>
<dbReference type="PANTHER" id="PTHR43884">
    <property type="entry name" value="ACYL-COA DEHYDROGENASE"/>
    <property type="match status" value="1"/>
</dbReference>
<dbReference type="PANTHER" id="PTHR43884:SF11">
    <property type="entry name" value="VERY LONG-CHAIN SPECIFIC ACYL-COA DEHYDROGENASE, MITOCHONDRIAL"/>
    <property type="match status" value="1"/>
</dbReference>
<dbReference type="Pfam" id="PF21343">
    <property type="entry name" value="ACAD9-ACADV_C"/>
    <property type="match status" value="1"/>
</dbReference>
<dbReference type="Pfam" id="PF00441">
    <property type="entry name" value="Acyl-CoA_dh_1"/>
    <property type="match status" value="1"/>
</dbReference>
<dbReference type="Pfam" id="PF02770">
    <property type="entry name" value="Acyl-CoA_dh_M"/>
    <property type="match status" value="1"/>
</dbReference>
<dbReference type="Pfam" id="PF02771">
    <property type="entry name" value="Acyl-CoA_dh_N"/>
    <property type="match status" value="1"/>
</dbReference>
<dbReference type="SUPFAM" id="SSF47203">
    <property type="entry name" value="Acyl-CoA dehydrogenase C-terminal domain-like"/>
    <property type="match status" value="1"/>
</dbReference>
<dbReference type="SUPFAM" id="SSF56645">
    <property type="entry name" value="Acyl-CoA dehydrogenase NM domain-like"/>
    <property type="match status" value="1"/>
</dbReference>
<dbReference type="PROSITE" id="PS00072">
    <property type="entry name" value="ACYL_COA_DH_1"/>
    <property type="match status" value="1"/>
</dbReference>
<dbReference type="PROSITE" id="PS00073">
    <property type="entry name" value="ACYL_COA_DH_2"/>
    <property type="match status" value="1"/>
</dbReference>
<gene>
    <name evidence="9" type="primary">Acadvl</name>
    <name evidence="7" type="synonym">Vlcad</name>
</gene>
<evidence type="ECO:0000250" key="1"/>
<evidence type="ECO:0000250" key="2">
    <source>
        <dbReference type="UniProtKB" id="P49748"/>
    </source>
</evidence>
<evidence type="ECO:0000256" key="3">
    <source>
        <dbReference type="SAM" id="MobiDB-lite"/>
    </source>
</evidence>
<evidence type="ECO:0000269" key="4">
    <source>
    </source>
</evidence>
<evidence type="ECO:0000305" key="5"/>
<evidence type="ECO:0000305" key="6">
    <source ref="1"/>
</evidence>
<evidence type="ECO:0000312" key="7">
    <source>
        <dbReference type="EMBL" id="CAA72435.1"/>
    </source>
</evidence>
<evidence type="ECO:0000312" key="8">
    <source>
        <dbReference type="EMBL" id="CAA94919.2"/>
    </source>
</evidence>
<evidence type="ECO:0000312" key="9">
    <source>
        <dbReference type="MGI" id="MGI:895149"/>
    </source>
</evidence>
<evidence type="ECO:0007744" key="10">
    <source>
    </source>
</evidence>
<evidence type="ECO:0007744" key="11">
    <source>
    </source>
</evidence>
<reference key="1">
    <citation type="submission" date="1997-03" db="EMBL/GenBank/DDBJ databases">
        <title>Mouse very-long-chain acyl-CoA dehydrogenase (VLCAD) gene.</title>
        <authorList>
            <person name="Andresen B.S."/>
            <person name="Lund H."/>
            <person name="Bross P."/>
            <person name="Gregersen N."/>
        </authorList>
    </citation>
    <scope>NUCLEOTIDE SEQUENCE [GENOMIC DNA]</scope>
    <source>
        <strain>129/SvJ</strain>
        <tissue>Blood</tissue>
    </source>
</reference>
<reference key="2">
    <citation type="submission" date="1996-04" db="EMBL/GenBank/DDBJ databases">
        <title>Cloning and characterization of mouse very-long-chain acyl-CoA dehydrogenase.</title>
        <authorList>
            <person name="Andresen B."/>
            <person name="Lund H."/>
            <person name="Bross P."/>
            <person name="Corydon M."/>
            <person name="Gregersen N."/>
        </authorList>
    </citation>
    <scope>NUCLEOTIDE SEQUENCE [MRNA]</scope>
    <source>
        <strain>BALB/cJ</strain>
        <tissue>Heart</tissue>
    </source>
</reference>
<reference key="3">
    <citation type="journal article" date="2004" name="Genome Res.">
        <title>The status, quality, and expansion of the NIH full-length cDNA project: the Mammalian Gene Collection (MGC).</title>
        <authorList>
            <consortium name="The MGC Project Team"/>
        </authorList>
    </citation>
    <scope>NUCLEOTIDE SEQUENCE [LARGE SCALE MRNA]</scope>
    <source>
        <strain>Czech II</strain>
        <tissue>Mammary gland</tissue>
    </source>
</reference>
<reference key="4">
    <citation type="journal article" date="1998" name="Mamm. Genome">
        <title>Chromosomal locations of the mouse fatty acid oxidation genes Cpt1a, Cpt1b, Cpt2, Acadvl, and metabolically related Crat gene.</title>
        <authorList>
            <person name="Cox K.B."/>
            <person name="Johnson K.R."/>
            <person name="Wood P.A."/>
        </authorList>
    </citation>
    <scope>NUCLEOTIDE SEQUENCE [MRNA] OF 84-656</scope>
    <source>
        <strain>ICR</strain>
        <tissue>Liver</tissue>
    </source>
</reference>
<reference key="5">
    <citation type="submission" date="1995-11" db="EMBL/GenBank/DDBJ databases">
        <authorList>
            <person name="Rao G."/>
            <person name="Krimer D."/>
            <person name="Krasikov T."/>
            <person name="Austin C."/>
            <person name="Skoultchi A.I."/>
        </authorList>
    </citation>
    <scope>NUCLEOTIDE SEQUENCE [MRNA] OF 339-656</scope>
</reference>
<reference key="6">
    <citation type="journal article" date="2010" name="Cell">
        <title>A tissue-specific atlas of mouse protein phosphorylation and expression.</title>
        <authorList>
            <person name="Huttlin E.L."/>
            <person name="Jedrychowski M.P."/>
            <person name="Elias J.E."/>
            <person name="Goswami T."/>
            <person name="Rad R."/>
            <person name="Beausoleil S.A."/>
            <person name="Villen J."/>
            <person name="Haas W."/>
            <person name="Sowa M.E."/>
            <person name="Gygi S.P."/>
        </authorList>
    </citation>
    <scope>IDENTIFICATION BY MASS SPECTROMETRY [LARGE SCALE ANALYSIS]</scope>
    <source>
        <tissue>Brain</tissue>
        <tissue>Brown adipose tissue</tissue>
        <tissue>Heart</tissue>
        <tissue>Kidney</tissue>
        <tissue>Liver</tissue>
        <tissue>Lung</tissue>
        <tissue>Pancreas</tissue>
        <tissue>Spleen</tissue>
        <tissue>Testis</tissue>
    </source>
</reference>
<reference key="7">
    <citation type="journal article" date="2013" name="Mol. Cell">
        <title>SIRT5-mediated lysine desuccinylation impacts diverse metabolic pathways.</title>
        <authorList>
            <person name="Park J."/>
            <person name="Chen Y."/>
            <person name="Tishkoff D.X."/>
            <person name="Peng C."/>
            <person name="Tan M."/>
            <person name="Dai L."/>
            <person name="Xie Z."/>
            <person name="Zhang Y."/>
            <person name="Zwaans B.M."/>
            <person name="Skinner M.E."/>
            <person name="Lombard D.B."/>
            <person name="Zhao Y."/>
        </authorList>
    </citation>
    <scope>SUCCINYLATION [LARGE SCALE ANALYSIS] AT LYS-72; LYS-128; LYS-196; LYS-240; LYS-269; LYS-277; LYS-279; LYS-332; LYS-373; LYS-483; LYS-557 AND LYS-640</scope>
    <scope>IDENTIFICATION BY MASS SPECTROMETRY [LARGE SCALE ANALYSIS]</scope>
    <source>
        <tissue>Embryonic fibroblast</tissue>
        <tissue>Liver</tissue>
    </source>
</reference>
<reference key="8">
    <citation type="journal article" date="2013" name="Proc. Natl. Acad. Sci. U.S.A.">
        <title>Label-free quantitative proteomics of the lysine acetylome in mitochondria identifies substrates of SIRT3 in metabolic pathways.</title>
        <authorList>
            <person name="Rardin M.J."/>
            <person name="Newman J.C."/>
            <person name="Held J.M."/>
            <person name="Cusack M.P."/>
            <person name="Sorensen D.J."/>
            <person name="Li B."/>
            <person name="Schilling B."/>
            <person name="Mooney S.D."/>
            <person name="Kahn C.R."/>
            <person name="Verdin E."/>
            <person name="Gibson B.W."/>
        </authorList>
    </citation>
    <scope>ACETYLATION [LARGE SCALE ANALYSIS] AT LYS-52; LYS-72; LYS-128; LYS-240; LYS-277; LYS-279; LYS-299; LYS-317; LYS-332; LYS-483; LYS-551 AND LYS-557</scope>
    <scope>IDENTIFICATION BY MASS SPECTROMETRY [LARGE SCALE ANALYSIS]</scope>
    <source>
        <tissue>Liver</tissue>
    </source>
</reference>
<reference key="9">
    <citation type="journal article" date="2013" name="Sci. Signal.">
        <title>Nitric oxide regulates mitochondrial Fatty Acid metabolism through reversible protein s-nitrosylation.</title>
        <authorList>
            <person name="Doulias P.T."/>
            <person name="Tenopoulou M."/>
            <person name="Greene J.L."/>
            <person name="Raju K."/>
            <person name="Ischiropoulos H."/>
        </authorList>
    </citation>
    <scope>S-NITROSYLATION AT CYS-238</scope>
</reference>
<feature type="transit peptide" description="Mitochondrion" evidence="1">
    <location>
        <begin position="1"/>
        <end position="41"/>
    </location>
</feature>
<feature type="chain" id="PRO_0000000517" description="Very long-chain specific acyl-CoA dehydrogenase, mitochondrial">
    <location>
        <begin position="42"/>
        <end position="656"/>
    </location>
</feature>
<feature type="region of interest" description="Disordered" evidence="3">
    <location>
        <begin position="1"/>
        <end position="33"/>
    </location>
</feature>
<feature type="region of interest" description="Catalytic" evidence="2">
    <location>
        <begin position="42"/>
        <end position="483"/>
    </location>
</feature>
<feature type="region of interest" description="Membrane-anchoring" evidence="2">
    <location>
        <begin position="484"/>
        <end position="517"/>
    </location>
</feature>
<feature type="active site" description="Proton acceptor" evidence="2">
    <location>
        <position position="463"/>
    </location>
</feature>
<feature type="binding site" evidence="2">
    <location>
        <begin position="215"/>
        <end position="224"/>
    </location>
    <ligand>
        <name>FAD</name>
        <dbReference type="ChEBI" id="CHEBI:57692"/>
    </ligand>
</feature>
<feature type="binding site" evidence="2">
    <location>
        <begin position="250"/>
        <end position="252"/>
    </location>
    <ligand>
        <name>FAD</name>
        <dbReference type="ChEBI" id="CHEBI:57692"/>
    </ligand>
</feature>
<feature type="binding site" evidence="2">
    <location>
        <begin position="462"/>
        <end position="464"/>
    </location>
    <ligand>
        <name>substrate</name>
    </ligand>
</feature>
<feature type="binding site" evidence="2">
    <location>
        <begin position="465"/>
        <end position="467"/>
    </location>
    <ligand>
        <name>FAD</name>
        <dbReference type="ChEBI" id="CHEBI:57692"/>
    </ligand>
</feature>
<feature type="binding site" evidence="2">
    <location>
        <position position="563"/>
    </location>
    <ligand>
        <name>FAD</name>
        <dbReference type="ChEBI" id="CHEBI:57692"/>
    </ligand>
</feature>
<feature type="modified residue" description="N6-acetyllysine" evidence="10">
    <location>
        <position position="52"/>
    </location>
</feature>
<feature type="modified residue" description="N6-acetyllysine; alternate" evidence="10">
    <location>
        <position position="72"/>
    </location>
</feature>
<feature type="modified residue" description="N6-succinyllysine; alternate" evidence="11">
    <location>
        <position position="72"/>
    </location>
</feature>
<feature type="modified residue" description="N6-acetyllysine; alternate" evidence="10">
    <location>
        <position position="128"/>
    </location>
</feature>
<feature type="modified residue" description="N6-succinyllysine; alternate" evidence="11">
    <location>
        <position position="128"/>
    </location>
</feature>
<feature type="modified residue" description="N6-succinyllysine" evidence="11">
    <location>
        <position position="196"/>
    </location>
</feature>
<feature type="modified residue" description="S-nitrosocysteine" evidence="4">
    <location>
        <position position="238"/>
    </location>
</feature>
<feature type="modified residue" description="N6-acetyllysine; alternate" evidence="10">
    <location>
        <position position="240"/>
    </location>
</feature>
<feature type="modified residue" description="N6-succinyllysine; alternate" evidence="11">
    <location>
        <position position="240"/>
    </location>
</feature>
<feature type="modified residue" description="N6-succinyllysine" evidence="11">
    <location>
        <position position="269"/>
    </location>
</feature>
<feature type="modified residue" description="N6-acetyllysine; alternate" evidence="10">
    <location>
        <position position="277"/>
    </location>
</feature>
<feature type="modified residue" description="N6-succinyllysine; alternate" evidence="11">
    <location>
        <position position="277"/>
    </location>
</feature>
<feature type="modified residue" description="N6-acetyllysine; alternate" evidence="10">
    <location>
        <position position="279"/>
    </location>
</feature>
<feature type="modified residue" description="N6-succinyllysine; alternate" evidence="11">
    <location>
        <position position="279"/>
    </location>
</feature>
<feature type="modified residue" description="N6-acetyllysine" evidence="10">
    <location>
        <position position="299"/>
    </location>
</feature>
<feature type="modified residue" description="N6-acetyllysine" evidence="10">
    <location>
        <position position="317"/>
    </location>
</feature>
<feature type="modified residue" description="N6-acetyllysine; alternate" evidence="10">
    <location>
        <position position="332"/>
    </location>
</feature>
<feature type="modified residue" description="N6-succinyllysine; alternate" evidence="11">
    <location>
        <position position="332"/>
    </location>
</feature>
<feature type="modified residue" description="N6-succinyllysine" evidence="11">
    <location>
        <position position="373"/>
    </location>
</feature>
<feature type="modified residue" description="N6-acetyllysine; alternate" evidence="10">
    <location>
        <position position="483"/>
    </location>
</feature>
<feature type="modified residue" description="N6-succinyllysine; alternate" evidence="11">
    <location>
        <position position="483"/>
    </location>
</feature>
<feature type="modified residue" description="Phosphoserine" evidence="2">
    <location>
        <position position="518"/>
    </location>
</feature>
<feature type="modified residue" description="Phosphoserine" evidence="2">
    <location>
        <position position="523"/>
    </location>
</feature>
<feature type="modified residue" description="N6-acetyllysine" evidence="10">
    <location>
        <position position="551"/>
    </location>
</feature>
<feature type="modified residue" description="N6-acetyllysine; alternate" evidence="10">
    <location>
        <position position="557"/>
    </location>
</feature>
<feature type="modified residue" description="N6-succinyllysine; alternate" evidence="11">
    <location>
        <position position="557"/>
    </location>
</feature>
<feature type="modified residue" description="N6-succinyllysine" evidence="11">
    <location>
        <position position="640"/>
    </location>
</feature>
<feature type="sequence conflict" description="In Ref. 5; AAA85185." evidence="5" ref="5">
    <original>NNG</original>
    <variation>GTR</variation>
    <location>
        <begin position="339"/>
        <end position="341"/>
    </location>
</feature>
<feature type="sequence conflict" description="In Ref. 5; AAA85185." evidence="5" ref="5">
    <original>C</original>
    <variation>W</variation>
    <location>
        <position position="423"/>
    </location>
</feature>
<feature type="sequence conflict" description="In Ref. 5; AAA85185." evidence="5" ref="5">
    <original>A</original>
    <variation>G</variation>
    <location>
        <position position="427"/>
    </location>
</feature>
<feature type="sequence conflict" description="In Ref. 5; AAA85185." evidence="5" ref="5">
    <original>M</original>
    <variation>I</variation>
    <location>
        <position position="441"/>
    </location>
</feature>
<feature type="sequence conflict" description="In Ref. 5; AAA85185." evidence="5" ref="5">
    <original>G</original>
    <variation>A</variation>
    <location>
        <position position="507"/>
    </location>
</feature>
<feature type="sequence conflict" description="In Ref. 5; AAA85185." evidence="5" ref="5">
    <original>R</original>
    <variation>P</variation>
    <location>
        <position position="532"/>
    </location>
</feature>
<feature type="sequence conflict" description="In Ref. 5; AAA85185." evidence="5" ref="5">
    <original>Q</original>
    <variation>K</variation>
    <location>
        <position position="567"/>
    </location>
</feature>
<feature type="sequence conflict" description="In Ref. 5; AAA85185." evidence="5" ref="5">
    <original>AD</original>
    <variation>GG</variation>
    <location>
        <begin position="570"/>
        <end position="571"/>
    </location>
</feature>
<feature type="sequence conflict" description="In Ref. 5; AAA85185." evidence="5" ref="5">
    <original>A</original>
    <variation>P</variation>
    <location>
        <position position="573"/>
    </location>
</feature>
<feature type="sequence conflict" description="In Ref. 5; AAA85185." evidence="5" ref="5">
    <original>G</original>
    <variation>A</variation>
    <location>
        <position position="593"/>
    </location>
</feature>
<feature type="sequence conflict" description="In Ref. 5; AAA85185." evidence="5" ref="5">
    <original>T</original>
    <variation>A</variation>
    <location>
        <position position="596"/>
    </location>
</feature>
<feature type="sequence conflict" description="In Ref. 5; AAA85185." evidence="5" ref="5">
    <original>A</original>
    <variation>P</variation>
    <location>
        <position position="612"/>
    </location>
</feature>
<feature type="sequence conflict" description="In Ref. 4; AAC31642." evidence="5" ref="4">
    <original>H</original>
    <variation>Q</variation>
    <location>
        <position position="628"/>
    </location>
</feature>